<comment type="function">
    <text evidence="1">Part of the bacilysin biosynthesis operon. May be involved in self-resistance to bacilysin by permitting efflux of this antibiotic (By similarity).</text>
</comment>
<comment type="subcellular location">
    <subcellularLocation>
        <location evidence="3">Cell membrane</location>
        <topology evidence="3">Multi-pass membrane protein</topology>
    </subcellularLocation>
</comment>
<comment type="similarity">
    <text evidence="3">Belongs to the major facilitator superfamily.</text>
</comment>
<sequence>MKQLKPNSKYLLFGQALSFMGDYCVLPALLILSTYYHDYWVTSGVIAVRSIPMVFQPFLGVLVDRLDRVKIMLWTDVIRGVIFLGLTFLPKGEYPLLFLALLFVSYGSGVFFNPARLAVMSSLEADIKNINTLFAKATTISIIVGAAAGGLFLLGGSVELAVAFNGVTYLVSAFFISRIKLQYVPIQSENVREAFQSFKEGLKEIKTNAFVLNAMFTMITMALLWGVVYSYFPIVSRFLGDGEIGNFILTFCIGFGGFIGAALVSKWGFNNNKGLMYFTVLSIVSLALFLFTPIFAVSVIAAILFFIAMEYGEVLAKVKVQENAANQIQGRIFSVAEASIGLCIAVGSMLINIVDAAVIMAFIVLLVSGLFLHTKLVNKSFSERNNESEQIHL</sequence>
<name>BACE2_BACIU</name>
<feature type="chain" id="PRO_0000084835" description="Putative bacilysin exporter BacE">
    <location>
        <begin position="1"/>
        <end position="393"/>
    </location>
</feature>
<feature type="transmembrane region" description="Helical" evidence="2">
    <location>
        <begin position="11"/>
        <end position="31"/>
    </location>
</feature>
<feature type="transmembrane region" description="Helical" evidence="2">
    <location>
        <begin position="43"/>
        <end position="63"/>
    </location>
</feature>
<feature type="transmembrane region" description="Helical" evidence="2">
    <location>
        <begin position="69"/>
        <end position="89"/>
    </location>
</feature>
<feature type="transmembrane region" description="Helical" evidence="2">
    <location>
        <begin position="92"/>
        <end position="112"/>
    </location>
</feature>
<feature type="transmembrane region" description="Helical" evidence="2">
    <location>
        <begin position="133"/>
        <end position="155"/>
    </location>
</feature>
<feature type="transmembrane region" description="Helical" evidence="2">
    <location>
        <begin position="160"/>
        <end position="177"/>
    </location>
</feature>
<feature type="transmembrane region" description="Helical" evidence="2">
    <location>
        <begin position="215"/>
        <end position="235"/>
    </location>
</feature>
<feature type="transmembrane region" description="Helical" evidence="2">
    <location>
        <begin position="244"/>
        <end position="264"/>
    </location>
</feature>
<feature type="transmembrane region" description="Helical" evidence="2">
    <location>
        <begin position="287"/>
        <end position="307"/>
    </location>
</feature>
<feature type="transmembrane region" description="Helical" evidence="2">
    <location>
        <begin position="353"/>
        <end position="373"/>
    </location>
</feature>
<gene>
    <name type="primary">bacE</name>
</gene>
<reference key="1">
    <citation type="journal article" date="2005" name="Arch. Microbiol.">
        <title>bac genes for recombinant bacilysin and anticapsin production in Bacillus host strains.</title>
        <authorList>
            <person name="Steinborn G."/>
            <person name="Hajirezaei M.-R."/>
            <person name="Hofemeister J."/>
        </authorList>
    </citation>
    <scope>NUCLEOTIDE SEQUENCE [GENOMIC DNA]</scope>
    <source>
        <strain>A1/3</strain>
    </source>
</reference>
<evidence type="ECO:0000250" key="1"/>
<evidence type="ECO:0000255" key="2"/>
<evidence type="ECO:0000305" key="3"/>
<organism>
    <name type="scientific">Bacillus subtilis</name>
    <dbReference type="NCBI Taxonomy" id="1423"/>
    <lineage>
        <taxon>Bacteria</taxon>
        <taxon>Bacillati</taxon>
        <taxon>Bacillota</taxon>
        <taxon>Bacilli</taxon>
        <taxon>Bacillales</taxon>
        <taxon>Bacillaceae</taxon>
        <taxon>Bacillus</taxon>
    </lineage>
</organism>
<proteinExistence type="inferred from homology"/>
<protein>
    <recommendedName>
        <fullName>Putative bacilysin exporter BacE</fullName>
    </recommendedName>
</protein>
<keyword id="KW-1003">Cell membrane</keyword>
<keyword id="KW-0472">Membrane</keyword>
<keyword id="KW-0812">Transmembrane</keyword>
<keyword id="KW-1133">Transmembrane helix</keyword>
<keyword id="KW-0813">Transport</keyword>
<dbReference type="EMBL" id="AF396778">
    <property type="protein sequence ID" value="AAM90572.1"/>
    <property type="molecule type" value="Genomic_DNA"/>
</dbReference>
<dbReference type="SMR" id="Q8KWT2"/>
<dbReference type="STRING" id="483913.AN935_19095"/>
<dbReference type="GO" id="GO:0005886">
    <property type="term" value="C:plasma membrane"/>
    <property type="evidence" value="ECO:0007669"/>
    <property type="project" value="UniProtKB-SubCell"/>
</dbReference>
<dbReference type="GO" id="GO:0022857">
    <property type="term" value="F:transmembrane transporter activity"/>
    <property type="evidence" value="ECO:0007669"/>
    <property type="project" value="InterPro"/>
</dbReference>
<dbReference type="CDD" id="cd06173">
    <property type="entry name" value="MFS_MefA_like"/>
    <property type="match status" value="1"/>
</dbReference>
<dbReference type="Gene3D" id="1.20.1250.20">
    <property type="entry name" value="MFS general substrate transporter like domains"/>
    <property type="match status" value="1"/>
</dbReference>
<dbReference type="InterPro" id="IPR022324">
    <property type="entry name" value="Bacilysin_exporter_BacE_put"/>
</dbReference>
<dbReference type="InterPro" id="IPR011701">
    <property type="entry name" value="MFS"/>
</dbReference>
<dbReference type="InterPro" id="IPR036259">
    <property type="entry name" value="MFS_trans_sf"/>
</dbReference>
<dbReference type="PANTHER" id="PTHR43266:SF10">
    <property type="entry name" value="BACILYSIN EXPORTER BACE-RELATED"/>
    <property type="match status" value="1"/>
</dbReference>
<dbReference type="PANTHER" id="PTHR43266">
    <property type="entry name" value="MACROLIDE-EFFLUX PROTEIN"/>
    <property type="match status" value="1"/>
</dbReference>
<dbReference type="Pfam" id="PF07690">
    <property type="entry name" value="MFS_1"/>
    <property type="match status" value="1"/>
</dbReference>
<dbReference type="PRINTS" id="PR01988">
    <property type="entry name" value="EXPORTERBACE"/>
</dbReference>
<dbReference type="SUPFAM" id="SSF103473">
    <property type="entry name" value="MFS general substrate transporter"/>
    <property type="match status" value="1"/>
</dbReference>
<accession>Q8KWT2</accession>